<gene>
    <name evidence="1" type="primary">purA</name>
    <name type="ordered locus">YPDSF_3596</name>
</gene>
<protein>
    <recommendedName>
        <fullName evidence="1">Adenylosuccinate synthetase</fullName>
        <shortName evidence="1">AMPSase</shortName>
        <shortName evidence="1">AdSS</shortName>
        <ecNumber evidence="1">6.3.4.4</ecNumber>
    </recommendedName>
    <alternativeName>
        <fullName evidence="1">IMP--aspartate ligase</fullName>
    </alternativeName>
</protein>
<name>PURA_YERPP</name>
<organism>
    <name type="scientific">Yersinia pestis (strain Pestoides F)</name>
    <dbReference type="NCBI Taxonomy" id="386656"/>
    <lineage>
        <taxon>Bacteria</taxon>
        <taxon>Pseudomonadati</taxon>
        <taxon>Pseudomonadota</taxon>
        <taxon>Gammaproteobacteria</taxon>
        <taxon>Enterobacterales</taxon>
        <taxon>Yersiniaceae</taxon>
        <taxon>Yersinia</taxon>
    </lineage>
</organism>
<proteinExistence type="inferred from homology"/>
<evidence type="ECO:0000255" key="1">
    <source>
        <dbReference type="HAMAP-Rule" id="MF_00011"/>
    </source>
</evidence>
<reference key="1">
    <citation type="submission" date="2007-02" db="EMBL/GenBank/DDBJ databases">
        <title>Complete sequence of chromosome of Yersinia pestis Pestoides F.</title>
        <authorList>
            <consortium name="US DOE Joint Genome Institute"/>
            <person name="Copeland A."/>
            <person name="Lucas S."/>
            <person name="Lapidus A."/>
            <person name="Barry K."/>
            <person name="Detter J.C."/>
            <person name="Glavina del Rio T."/>
            <person name="Hammon N."/>
            <person name="Israni S."/>
            <person name="Dalin E."/>
            <person name="Tice H."/>
            <person name="Pitluck S."/>
            <person name="Di Bartolo G."/>
            <person name="Chain P."/>
            <person name="Malfatti S."/>
            <person name="Shin M."/>
            <person name="Vergez L."/>
            <person name="Schmutz J."/>
            <person name="Larimer F."/>
            <person name="Land M."/>
            <person name="Hauser L."/>
            <person name="Worsham P."/>
            <person name="Chu M."/>
            <person name="Bearden S."/>
            <person name="Garcia E."/>
            <person name="Richardson P."/>
        </authorList>
    </citation>
    <scope>NUCLEOTIDE SEQUENCE [LARGE SCALE GENOMIC DNA]</scope>
    <source>
        <strain>Pestoides F</strain>
    </source>
</reference>
<dbReference type="EC" id="6.3.4.4" evidence="1"/>
<dbReference type="EMBL" id="CP000668">
    <property type="protein sequence ID" value="ABP41946.1"/>
    <property type="molecule type" value="Genomic_DNA"/>
</dbReference>
<dbReference type="RefSeq" id="WP_002209157.1">
    <property type="nucleotide sequence ID" value="NZ_CP009715.1"/>
</dbReference>
<dbReference type="SMR" id="A4TRN4"/>
<dbReference type="KEGG" id="ypp:YPDSF_3596"/>
<dbReference type="PATRIC" id="fig|386656.14.peg.256"/>
<dbReference type="UniPathway" id="UPA00075">
    <property type="reaction ID" value="UER00335"/>
</dbReference>
<dbReference type="GO" id="GO:0005737">
    <property type="term" value="C:cytoplasm"/>
    <property type="evidence" value="ECO:0007669"/>
    <property type="project" value="UniProtKB-SubCell"/>
</dbReference>
<dbReference type="GO" id="GO:0004019">
    <property type="term" value="F:adenylosuccinate synthase activity"/>
    <property type="evidence" value="ECO:0007669"/>
    <property type="project" value="UniProtKB-UniRule"/>
</dbReference>
<dbReference type="GO" id="GO:0005525">
    <property type="term" value="F:GTP binding"/>
    <property type="evidence" value="ECO:0007669"/>
    <property type="project" value="UniProtKB-UniRule"/>
</dbReference>
<dbReference type="GO" id="GO:0000287">
    <property type="term" value="F:magnesium ion binding"/>
    <property type="evidence" value="ECO:0007669"/>
    <property type="project" value="UniProtKB-UniRule"/>
</dbReference>
<dbReference type="GO" id="GO:0044208">
    <property type="term" value="P:'de novo' AMP biosynthetic process"/>
    <property type="evidence" value="ECO:0007669"/>
    <property type="project" value="UniProtKB-UniRule"/>
</dbReference>
<dbReference type="GO" id="GO:0046040">
    <property type="term" value="P:IMP metabolic process"/>
    <property type="evidence" value="ECO:0007669"/>
    <property type="project" value="TreeGrafter"/>
</dbReference>
<dbReference type="CDD" id="cd03108">
    <property type="entry name" value="AdSS"/>
    <property type="match status" value="1"/>
</dbReference>
<dbReference type="FunFam" id="1.10.300.10:FF:000001">
    <property type="entry name" value="Adenylosuccinate synthetase"/>
    <property type="match status" value="1"/>
</dbReference>
<dbReference type="FunFam" id="3.90.170.10:FF:000001">
    <property type="entry name" value="Adenylosuccinate synthetase"/>
    <property type="match status" value="1"/>
</dbReference>
<dbReference type="Gene3D" id="3.40.440.10">
    <property type="entry name" value="Adenylosuccinate Synthetase, subunit A, domain 1"/>
    <property type="match status" value="1"/>
</dbReference>
<dbReference type="Gene3D" id="1.10.300.10">
    <property type="entry name" value="Adenylosuccinate Synthetase, subunit A, domain 2"/>
    <property type="match status" value="1"/>
</dbReference>
<dbReference type="Gene3D" id="3.90.170.10">
    <property type="entry name" value="Adenylosuccinate Synthetase, subunit A, domain 3"/>
    <property type="match status" value="1"/>
</dbReference>
<dbReference type="HAMAP" id="MF_00011">
    <property type="entry name" value="Adenylosucc_synth"/>
    <property type="match status" value="1"/>
</dbReference>
<dbReference type="InterPro" id="IPR018220">
    <property type="entry name" value="Adenylosuccin_syn_GTP-bd"/>
</dbReference>
<dbReference type="InterPro" id="IPR033128">
    <property type="entry name" value="Adenylosuccin_syn_Lys_AS"/>
</dbReference>
<dbReference type="InterPro" id="IPR042109">
    <property type="entry name" value="Adenylosuccinate_synth_dom1"/>
</dbReference>
<dbReference type="InterPro" id="IPR042110">
    <property type="entry name" value="Adenylosuccinate_synth_dom2"/>
</dbReference>
<dbReference type="InterPro" id="IPR042111">
    <property type="entry name" value="Adenylosuccinate_synth_dom3"/>
</dbReference>
<dbReference type="InterPro" id="IPR001114">
    <property type="entry name" value="Adenylosuccinate_synthetase"/>
</dbReference>
<dbReference type="InterPro" id="IPR027417">
    <property type="entry name" value="P-loop_NTPase"/>
</dbReference>
<dbReference type="NCBIfam" id="NF002223">
    <property type="entry name" value="PRK01117.1"/>
    <property type="match status" value="1"/>
</dbReference>
<dbReference type="NCBIfam" id="TIGR00184">
    <property type="entry name" value="purA"/>
    <property type="match status" value="1"/>
</dbReference>
<dbReference type="PANTHER" id="PTHR11846">
    <property type="entry name" value="ADENYLOSUCCINATE SYNTHETASE"/>
    <property type="match status" value="1"/>
</dbReference>
<dbReference type="PANTHER" id="PTHR11846:SF0">
    <property type="entry name" value="ADENYLOSUCCINATE SYNTHETASE"/>
    <property type="match status" value="1"/>
</dbReference>
<dbReference type="Pfam" id="PF00709">
    <property type="entry name" value="Adenylsucc_synt"/>
    <property type="match status" value="1"/>
</dbReference>
<dbReference type="SMART" id="SM00788">
    <property type="entry name" value="Adenylsucc_synt"/>
    <property type="match status" value="1"/>
</dbReference>
<dbReference type="SUPFAM" id="SSF52540">
    <property type="entry name" value="P-loop containing nucleoside triphosphate hydrolases"/>
    <property type="match status" value="1"/>
</dbReference>
<dbReference type="PROSITE" id="PS01266">
    <property type="entry name" value="ADENYLOSUCCIN_SYN_1"/>
    <property type="match status" value="1"/>
</dbReference>
<dbReference type="PROSITE" id="PS00513">
    <property type="entry name" value="ADENYLOSUCCIN_SYN_2"/>
    <property type="match status" value="1"/>
</dbReference>
<keyword id="KW-0963">Cytoplasm</keyword>
<keyword id="KW-0342">GTP-binding</keyword>
<keyword id="KW-0436">Ligase</keyword>
<keyword id="KW-0460">Magnesium</keyword>
<keyword id="KW-0479">Metal-binding</keyword>
<keyword id="KW-0547">Nucleotide-binding</keyword>
<keyword id="KW-0658">Purine biosynthesis</keyword>
<sequence length="432" mass="47278">MGKNVVVLGTQWGDEGKGKVVDLLTERAKYVVRYQGGHNAGHTLVINGEKTVLHLIPSGILRENVISIIGNGVVLAPDALMKEMTELEARGVPVRERLLLSEACPLILPYHVALDNAREKARGAKAIGTTGRGIGPAYEDKVARRGLRVSDLFNKETFAIKLKEIVEYHNFQLVHYYKEAAVDYQKVLDDVLAIADILTAMVVDVSELLDNARKQGELIMFEGAQGTLLDIDHGTYPYVTSSNTTAGGVATGSGLGPRYVDYVLGIVKAYSTRVGAGPFPTELNDETGEFLRKQGNEYGATTGRSRRTGWLDIVAVRRAVQINSLSGFCMTKLDVLDGLKEVKLCVGYRMPDGREVDTTPLAAEGWEGIEPIYETMPGWSETTFGVKEHSKLPQAALNYIQRVEELTGVPIDIISTGPDRDETMILRDPFDA</sequence>
<comment type="function">
    <text evidence="1">Plays an important role in the de novo pathway of purine nucleotide biosynthesis. Catalyzes the first committed step in the biosynthesis of AMP from IMP.</text>
</comment>
<comment type="catalytic activity">
    <reaction evidence="1">
        <text>IMP + L-aspartate + GTP = N(6)-(1,2-dicarboxyethyl)-AMP + GDP + phosphate + 2 H(+)</text>
        <dbReference type="Rhea" id="RHEA:15753"/>
        <dbReference type="ChEBI" id="CHEBI:15378"/>
        <dbReference type="ChEBI" id="CHEBI:29991"/>
        <dbReference type="ChEBI" id="CHEBI:37565"/>
        <dbReference type="ChEBI" id="CHEBI:43474"/>
        <dbReference type="ChEBI" id="CHEBI:57567"/>
        <dbReference type="ChEBI" id="CHEBI:58053"/>
        <dbReference type="ChEBI" id="CHEBI:58189"/>
        <dbReference type="EC" id="6.3.4.4"/>
    </reaction>
</comment>
<comment type="cofactor">
    <cofactor evidence="1">
        <name>Mg(2+)</name>
        <dbReference type="ChEBI" id="CHEBI:18420"/>
    </cofactor>
    <text evidence="1">Binds 1 Mg(2+) ion per subunit.</text>
</comment>
<comment type="pathway">
    <text evidence="1">Purine metabolism; AMP biosynthesis via de novo pathway; AMP from IMP: step 1/2.</text>
</comment>
<comment type="subunit">
    <text evidence="1">Homodimer.</text>
</comment>
<comment type="subcellular location">
    <subcellularLocation>
        <location evidence="1">Cytoplasm</location>
    </subcellularLocation>
</comment>
<comment type="similarity">
    <text evidence="1">Belongs to the adenylosuccinate synthetase family.</text>
</comment>
<feature type="chain" id="PRO_1000000949" description="Adenylosuccinate synthetase">
    <location>
        <begin position="1"/>
        <end position="432"/>
    </location>
</feature>
<feature type="active site" description="Proton acceptor" evidence="1">
    <location>
        <position position="14"/>
    </location>
</feature>
<feature type="active site" description="Proton donor" evidence="1">
    <location>
        <position position="42"/>
    </location>
</feature>
<feature type="binding site" evidence="1">
    <location>
        <begin position="13"/>
        <end position="19"/>
    </location>
    <ligand>
        <name>GTP</name>
        <dbReference type="ChEBI" id="CHEBI:37565"/>
    </ligand>
</feature>
<feature type="binding site" description="in other chain" evidence="1">
    <location>
        <begin position="14"/>
        <end position="17"/>
    </location>
    <ligand>
        <name>IMP</name>
        <dbReference type="ChEBI" id="CHEBI:58053"/>
        <note>ligand shared between dimeric partners</note>
    </ligand>
</feature>
<feature type="binding site" evidence="1">
    <location>
        <position position="14"/>
    </location>
    <ligand>
        <name>Mg(2+)</name>
        <dbReference type="ChEBI" id="CHEBI:18420"/>
    </ligand>
</feature>
<feature type="binding site" description="in other chain" evidence="1">
    <location>
        <begin position="39"/>
        <end position="42"/>
    </location>
    <ligand>
        <name>IMP</name>
        <dbReference type="ChEBI" id="CHEBI:58053"/>
        <note>ligand shared between dimeric partners</note>
    </ligand>
</feature>
<feature type="binding site" evidence="1">
    <location>
        <begin position="41"/>
        <end position="43"/>
    </location>
    <ligand>
        <name>GTP</name>
        <dbReference type="ChEBI" id="CHEBI:37565"/>
    </ligand>
</feature>
<feature type="binding site" evidence="1">
    <location>
        <position position="41"/>
    </location>
    <ligand>
        <name>Mg(2+)</name>
        <dbReference type="ChEBI" id="CHEBI:18420"/>
    </ligand>
</feature>
<feature type="binding site" description="in other chain" evidence="1">
    <location>
        <position position="130"/>
    </location>
    <ligand>
        <name>IMP</name>
        <dbReference type="ChEBI" id="CHEBI:58053"/>
        <note>ligand shared between dimeric partners</note>
    </ligand>
</feature>
<feature type="binding site" evidence="1">
    <location>
        <position position="144"/>
    </location>
    <ligand>
        <name>IMP</name>
        <dbReference type="ChEBI" id="CHEBI:58053"/>
        <note>ligand shared between dimeric partners</note>
    </ligand>
</feature>
<feature type="binding site" description="in other chain" evidence="1">
    <location>
        <position position="225"/>
    </location>
    <ligand>
        <name>IMP</name>
        <dbReference type="ChEBI" id="CHEBI:58053"/>
        <note>ligand shared between dimeric partners</note>
    </ligand>
</feature>
<feature type="binding site" description="in other chain" evidence="1">
    <location>
        <position position="240"/>
    </location>
    <ligand>
        <name>IMP</name>
        <dbReference type="ChEBI" id="CHEBI:58053"/>
        <note>ligand shared between dimeric partners</note>
    </ligand>
</feature>
<feature type="binding site" evidence="1">
    <location>
        <begin position="300"/>
        <end position="306"/>
    </location>
    <ligand>
        <name>substrate</name>
    </ligand>
</feature>
<feature type="binding site" description="in other chain" evidence="1">
    <location>
        <position position="304"/>
    </location>
    <ligand>
        <name>IMP</name>
        <dbReference type="ChEBI" id="CHEBI:58053"/>
        <note>ligand shared between dimeric partners</note>
    </ligand>
</feature>
<feature type="binding site" evidence="1">
    <location>
        <position position="306"/>
    </location>
    <ligand>
        <name>GTP</name>
        <dbReference type="ChEBI" id="CHEBI:37565"/>
    </ligand>
</feature>
<feature type="binding site" evidence="1">
    <location>
        <begin position="332"/>
        <end position="334"/>
    </location>
    <ligand>
        <name>GTP</name>
        <dbReference type="ChEBI" id="CHEBI:37565"/>
    </ligand>
</feature>
<feature type="binding site" evidence="1">
    <location>
        <begin position="415"/>
        <end position="417"/>
    </location>
    <ligand>
        <name>GTP</name>
        <dbReference type="ChEBI" id="CHEBI:37565"/>
    </ligand>
</feature>
<accession>A4TRN4</accession>